<name>RL13_CLOB1</name>
<evidence type="ECO:0000255" key="1">
    <source>
        <dbReference type="HAMAP-Rule" id="MF_01366"/>
    </source>
</evidence>
<evidence type="ECO:0000305" key="2"/>
<feature type="chain" id="PRO_1000055368" description="Large ribosomal subunit protein uL13">
    <location>
        <begin position="1"/>
        <end position="144"/>
    </location>
</feature>
<comment type="function">
    <text evidence="1">This protein is one of the early assembly proteins of the 50S ribosomal subunit, although it is not seen to bind rRNA by itself. It is important during the early stages of 50S assembly.</text>
</comment>
<comment type="subunit">
    <text evidence="1">Part of the 50S ribosomal subunit.</text>
</comment>
<comment type="similarity">
    <text evidence="1">Belongs to the universal ribosomal protein uL13 family.</text>
</comment>
<accession>A7FZ38</accession>
<reference key="1">
    <citation type="journal article" date="2007" name="PLoS ONE">
        <title>Analysis of the neurotoxin complex genes in Clostridium botulinum A1-A4 and B1 strains: BoNT/A3, /Ba4 and /B1 clusters are located within plasmids.</title>
        <authorList>
            <person name="Smith T.J."/>
            <person name="Hill K.K."/>
            <person name="Foley B.T."/>
            <person name="Detter J.C."/>
            <person name="Munk A.C."/>
            <person name="Bruce D.C."/>
            <person name="Doggett N.A."/>
            <person name="Smith L.A."/>
            <person name="Marks J.D."/>
            <person name="Xie G."/>
            <person name="Brettin T.S."/>
        </authorList>
    </citation>
    <scope>NUCLEOTIDE SEQUENCE [LARGE SCALE GENOMIC DNA]</scope>
    <source>
        <strain>ATCC 19397 / Type A</strain>
    </source>
</reference>
<gene>
    <name evidence="1" type="primary">rplM</name>
    <name type="ordered locus">CLB_3502</name>
</gene>
<protein>
    <recommendedName>
        <fullName evidence="1">Large ribosomal subunit protein uL13</fullName>
    </recommendedName>
    <alternativeName>
        <fullName evidence="2">50S ribosomal protein L13</fullName>
    </alternativeName>
</protein>
<dbReference type="EMBL" id="CP000726">
    <property type="protein sequence ID" value="ABS35459.1"/>
    <property type="molecule type" value="Genomic_DNA"/>
</dbReference>
<dbReference type="RefSeq" id="WP_003494906.1">
    <property type="nucleotide sequence ID" value="NC_009697.1"/>
</dbReference>
<dbReference type="SMR" id="A7FZ38"/>
<dbReference type="GeneID" id="92940215"/>
<dbReference type="KEGG" id="cba:CLB_3502"/>
<dbReference type="HOGENOM" id="CLU_082184_2_2_9"/>
<dbReference type="GO" id="GO:0022625">
    <property type="term" value="C:cytosolic large ribosomal subunit"/>
    <property type="evidence" value="ECO:0007669"/>
    <property type="project" value="TreeGrafter"/>
</dbReference>
<dbReference type="GO" id="GO:0003729">
    <property type="term" value="F:mRNA binding"/>
    <property type="evidence" value="ECO:0007669"/>
    <property type="project" value="TreeGrafter"/>
</dbReference>
<dbReference type="GO" id="GO:0003735">
    <property type="term" value="F:structural constituent of ribosome"/>
    <property type="evidence" value="ECO:0007669"/>
    <property type="project" value="InterPro"/>
</dbReference>
<dbReference type="GO" id="GO:0017148">
    <property type="term" value="P:negative regulation of translation"/>
    <property type="evidence" value="ECO:0007669"/>
    <property type="project" value="TreeGrafter"/>
</dbReference>
<dbReference type="GO" id="GO:0006412">
    <property type="term" value="P:translation"/>
    <property type="evidence" value="ECO:0007669"/>
    <property type="project" value="UniProtKB-UniRule"/>
</dbReference>
<dbReference type="CDD" id="cd00392">
    <property type="entry name" value="Ribosomal_L13"/>
    <property type="match status" value="1"/>
</dbReference>
<dbReference type="FunFam" id="3.90.1180.10:FF:000001">
    <property type="entry name" value="50S ribosomal protein L13"/>
    <property type="match status" value="1"/>
</dbReference>
<dbReference type="Gene3D" id="3.90.1180.10">
    <property type="entry name" value="Ribosomal protein L13"/>
    <property type="match status" value="1"/>
</dbReference>
<dbReference type="HAMAP" id="MF_01366">
    <property type="entry name" value="Ribosomal_uL13"/>
    <property type="match status" value="1"/>
</dbReference>
<dbReference type="InterPro" id="IPR005822">
    <property type="entry name" value="Ribosomal_uL13"/>
</dbReference>
<dbReference type="InterPro" id="IPR005823">
    <property type="entry name" value="Ribosomal_uL13_bac-type"/>
</dbReference>
<dbReference type="InterPro" id="IPR023563">
    <property type="entry name" value="Ribosomal_uL13_CS"/>
</dbReference>
<dbReference type="InterPro" id="IPR036899">
    <property type="entry name" value="Ribosomal_uL13_sf"/>
</dbReference>
<dbReference type="NCBIfam" id="TIGR01066">
    <property type="entry name" value="rplM_bact"/>
    <property type="match status" value="1"/>
</dbReference>
<dbReference type="PANTHER" id="PTHR11545:SF2">
    <property type="entry name" value="LARGE RIBOSOMAL SUBUNIT PROTEIN UL13M"/>
    <property type="match status" value="1"/>
</dbReference>
<dbReference type="PANTHER" id="PTHR11545">
    <property type="entry name" value="RIBOSOMAL PROTEIN L13"/>
    <property type="match status" value="1"/>
</dbReference>
<dbReference type="Pfam" id="PF00572">
    <property type="entry name" value="Ribosomal_L13"/>
    <property type="match status" value="1"/>
</dbReference>
<dbReference type="PIRSF" id="PIRSF002181">
    <property type="entry name" value="Ribosomal_L13"/>
    <property type="match status" value="1"/>
</dbReference>
<dbReference type="SUPFAM" id="SSF52161">
    <property type="entry name" value="Ribosomal protein L13"/>
    <property type="match status" value="1"/>
</dbReference>
<dbReference type="PROSITE" id="PS00783">
    <property type="entry name" value="RIBOSOMAL_L13"/>
    <property type="match status" value="1"/>
</dbReference>
<keyword id="KW-0687">Ribonucleoprotein</keyword>
<keyword id="KW-0689">Ribosomal protein</keyword>
<sequence length="144" mass="16479">MKSYIAKPHEVERKWYIVDAADKPLGRVASQVASILRGKHKPTYTPHVDTGDNVIVINVEKVVLTGKKLDQKLLRHHSLYPGGLKEIPYREAIAKKPEFVFEEAVRRMLPSGVLGRKMLKKLKVYKGAEHNQEAQKPEVLELRY</sequence>
<proteinExistence type="inferred from homology"/>
<organism>
    <name type="scientific">Clostridium botulinum (strain ATCC 19397 / Type A)</name>
    <dbReference type="NCBI Taxonomy" id="441770"/>
    <lineage>
        <taxon>Bacteria</taxon>
        <taxon>Bacillati</taxon>
        <taxon>Bacillota</taxon>
        <taxon>Clostridia</taxon>
        <taxon>Eubacteriales</taxon>
        <taxon>Clostridiaceae</taxon>
        <taxon>Clostridium</taxon>
    </lineage>
</organism>